<protein>
    <recommendedName>
        <fullName evidence="1">Orotate phosphoribosyltransferase</fullName>
        <shortName evidence="1">OPRT</shortName>
        <shortName evidence="1">OPRTase</shortName>
        <ecNumber evidence="1">2.4.2.10</ecNumber>
    </recommendedName>
</protein>
<comment type="function">
    <text evidence="1">Catalyzes the transfer of a ribosyl phosphate group from 5-phosphoribose 1-diphosphate to orotate, leading to the formation of orotidine monophosphate (OMP).</text>
</comment>
<comment type="catalytic activity">
    <reaction evidence="1">
        <text>orotidine 5'-phosphate + diphosphate = orotate + 5-phospho-alpha-D-ribose 1-diphosphate</text>
        <dbReference type="Rhea" id="RHEA:10380"/>
        <dbReference type="ChEBI" id="CHEBI:30839"/>
        <dbReference type="ChEBI" id="CHEBI:33019"/>
        <dbReference type="ChEBI" id="CHEBI:57538"/>
        <dbReference type="ChEBI" id="CHEBI:58017"/>
        <dbReference type="EC" id="2.4.2.10"/>
    </reaction>
</comment>
<comment type="cofactor">
    <cofactor evidence="1">
        <name>Mg(2+)</name>
        <dbReference type="ChEBI" id="CHEBI:18420"/>
    </cofactor>
</comment>
<comment type="pathway">
    <text evidence="1">Pyrimidine metabolism; UMP biosynthesis via de novo pathway; UMP from orotate: step 1/2.</text>
</comment>
<comment type="subunit">
    <text evidence="1">Homodimer.</text>
</comment>
<comment type="similarity">
    <text evidence="1">Belongs to the purine/pyrimidine phosphoribosyltransferase family. PyrE subfamily.</text>
</comment>
<keyword id="KW-0328">Glycosyltransferase</keyword>
<keyword id="KW-0460">Magnesium</keyword>
<keyword id="KW-0665">Pyrimidine biosynthesis</keyword>
<keyword id="KW-0808">Transferase</keyword>
<feature type="chain" id="PRO_1000138766" description="Orotate phosphoribosyltransferase">
    <location>
        <begin position="1"/>
        <end position="192"/>
    </location>
</feature>
<feature type="binding site" evidence="1">
    <location>
        <begin position="116"/>
        <end position="124"/>
    </location>
    <ligand>
        <name>5-phospho-alpha-D-ribose 1-diphosphate</name>
        <dbReference type="ChEBI" id="CHEBI:58017"/>
    </ligand>
</feature>
<feature type="binding site" evidence="1">
    <location>
        <position position="120"/>
    </location>
    <ligand>
        <name>orotate</name>
        <dbReference type="ChEBI" id="CHEBI:30839"/>
    </ligand>
</feature>
<feature type="binding site" evidence="1">
    <location>
        <position position="148"/>
    </location>
    <ligand>
        <name>orotate</name>
        <dbReference type="ChEBI" id="CHEBI:30839"/>
    </ligand>
</feature>
<accession>B2SAD1</accession>
<reference key="1">
    <citation type="journal article" date="2008" name="PLoS ONE">
        <title>Genome sequence of Brucella abortus vaccine strain S19 compared to virulent strains yields candidate virulence genes.</title>
        <authorList>
            <person name="Crasta O.R."/>
            <person name="Folkerts O."/>
            <person name="Fei Z."/>
            <person name="Mane S.P."/>
            <person name="Evans C."/>
            <person name="Martino-Catt S."/>
            <person name="Bricker B."/>
            <person name="Yu G."/>
            <person name="Du L."/>
            <person name="Sobral B.W."/>
        </authorList>
    </citation>
    <scope>NUCLEOTIDE SEQUENCE [LARGE SCALE GENOMIC DNA]</scope>
    <source>
        <strain>S19</strain>
    </source>
</reference>
<proteinExistence type="inferred from homology"/>
<name>PYRE_BRUA1</name>
<gene>
    <name evidence="1" type="primary">pyrE</name>
    <name type="ordered locus">BAbS19_I06300</name>
</gene>
<dbReference type="EC" id="2.4.2.10" evidence="1"/>
<dbReference type="EMBL" id="CP000887">
    <property type="protein sequence ID" value="ACD72161.1"/>
    <property type="molecule type" value="Genomic_DNA"/>
</dbReference>
<dbReference type="RefSeq" id="WP_002963797.1">
    <property type="nucleotide sequence ID" value="NC_010742.1"/>
</dbReference>
<dbReference type="SMR" id="B2SAD1"/>
<dbReference type="GeneID" id="97534018"/>
<dbReference type="KEGG" id="bmc:BAbS19_I06300"/>
<dbReference type="HOGENOM" id="CLU_074878_3_0_5"/>
<dbReference type="UniPathway" id="UPA00070">
    <property type="reaction ID" value="UER00119"/>
</dbReference>
<dbReference type="Proteomes" id="UP000002565">
    <property type="component" value="Chromosome 1"/>
</dbReference>
<dbReference type="GO" id="GO:0000287">
    <property type="term" value="F:magnesium ion binding"/>
    <property type="evidence" value="ECO:0007669"/>
    <property type="project" value="UniProtKB-UniRule"/>
</dbReference>
<dbReference type="GO" id="GO:0004588">
    <property type="term" value="F:orotate phosphoribosyltransferase activity"/>
    <property type="evidence" value="ECO:0007669"/>
    <property type="project" value="UniProtKB-UniRule"/>
</dbReference>
<dbReference type="GO" id="GO:0044205">
    <property type="term" value="P:'de novo' UMP biosynthetic process"/>
    <property type="evidence" value="ECO:0007669"/>
    <property type="project" value="UniProtKB-UniRule"/>
</dbReference>
<dbReference type="GO" id="GO:0019856">
    <property type="term" value="P:pyrimidine nucleobase biosynthetic process"/>
    <property type="evidence" value="ECO:0007669"/>
    <property type="project" value="InterPro"/>
</dbReference>
<dbReference type="CDD" id="cd06223">
    <property type="entry name" value="PRTases_typeI"/>
    <property type="match status" value="1"/>
</dbReference>
<dbReference type="Gene3D" id="3.40.50.2020">
    <property type="match status" value="1"/>
</dbReference>
<dbReference type="HAMAP" id="MF_01208">
    <property type="entry name" value="PyrE"/>
    <property type="match status" value="1"/>
</dbReference>
<dbReference type="InterPro" id="IPR023031">
    <property type="entry name" value="OPRT"/>
</dbReference>
<dbReference type="InterPro" id="IPR006273">
    <property type="entry name" value="Orotate_PRibTrfase_bac"/>
</dbReference>
<dbReference type="InterPro" id="IPR000836">
    <property type="entry name" value="PRibTrfase_dom"/>
</dbReference>
<dbReference type="InterPro" id="IPR029057">
    <property type="entry name" value="PRTase-like"/>
</dbReference>
<dbReference type="NCBIfam" id="TIGR01367">
    <property type="entry name" value="pyrE_Therm"/>
    <property type="match status" value="1"/>
</dbReference>
<dbReference type="PANTHER" id="PTHR19278">
    <property type="entry name" value="OROTATE PHOSPHORIBOSYLTRANSFERASE"/>
    <property type="match status" value="1"/>
</dbReference>
<dbReference type="PANTHER" id="PTHR19278:SF9">
    <property type="entry name" value="URIDINE 5'-MONOPHOSPHATE SYNTHASE"/>
    <property type="match status" value="1"/>
</dbReference>
<dbReference type="Pfam" id="PF00156">
    <property type="entry name" value="Pribosyltran"/>
    <property type="match status" value="1"/>
</dbReference>
<dbReference type="SUPFAM" id="SSF53271">
    <property type="entry name" value="PRTase-like"/>
    <property type="match status" value="1"/>
</dbReference>
<dbReference type="PROSITE" id="PS00103">
    <property type="entry name" value="PUR_PYR_PR_TRANSFER"/>
    <property type="match status" value="1"/>
</dbReference>
<evidence type="ECO:0000255" key="1">
    <source>
        <dbReference type="HAMAP-Rule" id="MF_01208"/>
    </source>
</evidence>
<sequence>MNTDDVLAVFREAGAILEGHFILTSGLRSPVFLQKARVFMHADKTEKLCKALAEKIRAADLGPIDYVVGPAIGGLIPSYETSRHLGVPSVWVERENGVFRLRRFDVPKGARVVIVEDIVTTGLSIRETIDCMKDLGIEVVAAACIVDRSAGKADVGTRLISLAEYEVPAYPADKLPPELAAIPAVKPGSRNI</sequence>
<organism>
    <name type="scientific">Brucella abortus (strain S19)</name>
    <dbReference type="NCBI Taxonomy" id="430066"/>
    <lineage>
        <taxon>Bacteria</taxon>
        <taxon>Pseudomonadati</taxon>
        <taxon>Pseudomonadota</taxon>
        <taxon>Alphaproteobacteria</taxon>
        <taxon>Hyphomicrobiales</taxon>
        <taxon>Brucellaceae</taxon>
        <taxon>Brucella/Ochrobactrum group</taxon>
        <taxon>Brucella</taxon>
    </lineage>
</organism>